<evidence type="ECO:0000250" key="1"/>
<evidence type="ECO:0000255" key="2"/>
<evidence type="ECO:0000255" key="3">
    <source>
        <dbReference type="PROSITE-ProRule" id="PRU00289"/>
    </source>
</evidence>
<evidence type="ECO:0000256" key="4">
    <source>
        <dbReference type="SAM" id="MobiDB-lite"/>
    </source>
</evidence>
<evidence type="ECO:0000305" key="5"/>
<dbReference type="EMBL" id="BA000035">
    <property type="protein sequence ID" value="BAC18671.1"/>
    <property type="status" value="ALT_INIT"/>
    <property type="molecule type" value="Genomic_DNA"/>
</dbReference>
<dbReference type="SMR" id="Q8FPC1"/>
<dbReference type="STRING" id="196164.gene:10742289"/>
<dbReference type="KEGG" id="cef:CE1861"/>
<dbReference type="eggNOG" id="COG1674">
    <property type="taxonomic scope" value="Bacteria"/>
</dbReference>
<dbReference type="HOGENOM" id="CLU_001981_2_1_11"/>
<dbReference type="Proteomes" id="UP000001409">
    <property type="component" value="Chromosome"/>
</dbReference>
<dbReference type="GO" id="GO:0005886">
    <property type="term" value="C:plasma membrane"/>
    <property type="evidence" value="ECO:0007669"/>
    <property type="project" value="UniProtKB-SubCell"/>
</dbReference>
<dbReference type="GO" id="GO:0005524">
    <property type="term" value="F:ATP binding"/>
    <property type="evidence" value="ECO:0007669"/>
    <property type="project" value="UniProtKB-KW"/>
</dbReference>
<dbReference type="GO" id="GO:0003677">
    <property type="term" value="F:DNA binding"/>
    <property type="evidence" value="ECO:0007669"/>
    <property type="project" value="UniProtKB-KW"/>
</dbReference>
<dbReference type="GO" id="GO:0051301">
    <property type="term" value="P:cell division"/>
    <property type="evidence" value="ECO:0007669"/>
    <property type="project" value="UniProtKB-KW"/>
</dbReference>
<dbReference type="GO" id="GO:0007059">
    <property type="term" value="P:chromosome segregation"/>
    <property type="evidence" value="ECO:0007669"/>
    <property type="project" value="UniProtKB-KW"/>
</dbReference>
<dbReference type="CDD" id="cd01127">
    <property type="entry name" value="TrwB_TraG_TraD_VirD4"/>
    <property type="match status" value="1"/>
</dbReference>
<dbReference type="FunFam" id="3.40.50.300:FF:000209">
    <property type="entry name" value="Cell division protein FtsK"/>
    <property type="match status" value="1"/>
</dbReference>
<dbReference type="Gene3D" id="3.30.980.40">
    <property type="match status" value="1"/>
</dbReference>
<dbReference type="Gene3D" id="3.40.50.300">
    <property type="entry name" value="P-loop containing nucleotide triphosphate hydrolases"/>
    <property type="match status" value="1"/>
</dbReference>
<dbReference type="Gene3D" id="1.10.10.10">
    <property type="entry name" value="Winged helix-like DNA-binding domain superfamily/Winged helix DNA-binding domain"/>
    <property type="match status" value="1"/>
</dbReference>
<dbReference type="InterPro" id="IPR050206">
    <property type="entry name" value="FtsK/SpoIIIE/SftA"/>
</dbReference>
<dbReference type="InterPro" id="IPR025199">
    <property type="entry name" value="FtsK_4TM"/>
</dbReference>
<dbReference type="InterPro" id="IPR041027">
    <property type="entry name" value="FtsK_alpha"/>
</dbReference>
<dbReference type="InterPro" id="IPR002543">
    <property type="entry name" value="FtsK_dom"/>
</dbReference>
<dbReference type="InterPro" id="IPR018541">
    <property type="entry name" value="Ftsk_gamma"/>
</dbReference>
<dbReference type="InterPro" id="IPR027417">
    <property type="entry name" value="P-loop_NTPase"/>
</dbReference>
<dbReference type="InterPro" id="IPR036388">
    <property type="entry name" value="WH-like_DNA-bd_sf"/>
</dbReference>
<dbReference type="InterPro" id="IPR036390">
    <property type="entry name" value="WH_DNA-bd_sf"/>
</dbReference>
<dbReference type="PANTHER" id="PTHR22683:SF41">
    <property type="entry name" value="DNA TRANSLOCASE FTSK"/>
    <property type="match status" value="1"/>
</dbReference>
<dbReference type="PANTHER" id="PTHR22683">
    <property type="entry name" value="SPORULATION PROTEIN RELATED"/>
    <property type="match status" value="1"/>
</dbReference>
<dbReference type="Pfam" id="PF13491">
    <property type="entry name" value="FtsK_4TM"/>
    <property type="match status" value="1"/>
</dbReference>
<dbReference type="Pfam" id="PF17854">
    <property type="entry name" value="FtsK_alpha"/>
    <property type="match status" value="1"/>
</dbReference>
<dbReference type="Pfam" id="PF09397">
    <property type="entry name" value="FtsK_gamma"/>
    <property type="match status" value="1"/>
</dbReference>
<dbReference type="Pfam" id="PF01580">
    <property type="entry name" value="FtsK_SpoIIIE"/>
    <property type="match status" value="1"/>
</dbReference>
<dbReference type="SMART" id="SM00843">
    <property type="entry name" value="Ftsk_gamma"/>
    <property type="match status" value="1"/>
</dbReference>
<dbReference type="SUPFAM" id="SSF52540">
    <property type="entry name" value="P-loop containing nucleoside triphosphate hydrolases"/>
    <property type="match status" value="1"/>
</dbReference>
<dbReference type="SUPFAM" id="SSF46785">
    <property type="entry name" value="Winged helix' DNA-binding domain"/>
    <property type="match status" value="1"/>
</dbReference>
<dbReference type="PROSITE" id="PS50901">
    <property type="entry name" value="FTSK"/>
    <property type="match status" value="1"/>
</dbReference>
<organism>
    <name type="scientific">Corynebacterium efficiens (strain DSM 44549 / YS-314 / AJ 12310 / JCM 11189 / NBRC 100395)</name>
    <dbReference type="NCBI Taxonomy" id="196164"/>
    <lineage>
        <taxon>Bacteria</taxon>
        <taxon>Bacillati</taxon>
        <taxon>Actinomycetota</taxon>
        <taxon>Actinomycetes</taxon>
        <taxon>Mycobacteriales</taxon>
        <taxon>Corynebacteriaceae</taxon>
        <taxon>Corynebacterium</taxon>
    </lineage>
</organism>
<sequence>MTRSLGDLARGRGDDADDFDDFDDFEEEISTKPKARATTRRSTRASTEDVYEEDGTDSPPRTSSWGRAGTFMDEHADGIALTLVGIAIVLGAAVWLGVGGPVGTFIADIVHLTIGAGAWVLPVALIAAAVALMLNYTPDPQSRTRVGIGGSIILLCMLGLIHLFAGNPAEWAGRKNAGGAIGAWVGTPLELGFSVYLAVPILFLILFYGALKTTGITIREFGGFVTGFFGFGAGAEDDDEEGDDLYGHVDREIETRASGRALPAAEPRPTRVTPRRTTSSTPRRAAASLDRYPADEPGTPPGPPPSVAPTGSRERKQTEASTSIEPALFPEPERRKPSVSETDEFPAVKAPETPAAEAPAPAKDSARDAVAASRENLRQAMIQRSGMDPQGPPKEEPEDNPGVVVSDGDSTYVLPSADLLIPGAPAKTHSETNDRIIEAITDVFREFNVDAAVTGFSRGPTVTRYEIELGPGVKVSKITNLQSNIAYAVATENVRLLTPIPGKSAVGIEVPNADREMVRLGDVLNAPATVDNLDPMLVGLGKDIEGDFVSYSVQKMPHLLVAGSTGSGKSAFVNSLLVSLLTRATPEEVRLILVDPKMVELTPYEGIPHLITPIITQPKKAAAALQWLVEEMEQRYMDMKQTRVRHIKDFNRKIKSGEIETPLGSKREYRAYPYIICVVDELADLMMTAPKEIEESIVRITQKARAAGIHLVLATQRPSVDVVTGLIKTNVPSRLAFATSSLTDSRVILDQGGAEKLIGMGDALFIPQGAGKPQRIQGAFVTDEEIQAVVEAAKVQAEPDYTDGVTEDKGGDSKKIDADIGDDLDDLLEAVELVVTSQIGSTSMLQRKLRIGFAKAGRLMDLMETRGVVGPSEGSKAREVLVKPEELDTILWMLKGADPADAPKEEQWGDDGYAEPVGEGPGDGSDDSSSSDGTTVVRANPAGGVF</sequence>
<reference key="1">
    <citation type="journal article" date="2003" name="Genome Res.">
        <title>Comparative complete genome sequence analysis of the amino acid replacements responsible for the thermostability of Corynebacterium efficiens.</title>
        <authorList>
            <person name="Nishio Y."/>
            <person name="Nakamura Y."/>
            <person name="Kawarabayasi Y."/>
            <person name="Usuda Y."/>
            <person name="Kimura E."/>
            <person name="Sugimoto S."/>
            <person name="Matsui K."/>
            <person name="Yamagishi A."/>
            <person name="Kikuchi H."/>
            <person name="Ikeo K."/>
            <person name="Gojobori T."/>
        </authorList>
    </citation>
    <scope>NUCLEOTIDE SEQUENCE [LARGE SCALE GENOMIC DNA]</scope>
    <source>
        <strain>DSM 44549 / YS-314 / AJ 12310 / JCM 11189 / NBRC 100395</strain>
    </source>
</reference>
<feature type="chain" id="PRO_0000098254" description="DNA translocase FtsK">
    <location>
        <begin position="1"/>
        <end position="946"/>
    </location>
</feature>
<feature type="transmembrane region" description="Helical" evidence="2">
    <location>
        <begin position="78"/>
        <end position="98"/>
    </location>
</feature>
<feature type="transmembrane region" description="Helical" evidence="2">
    <location>
        <begin position="114"/>
        <end position="134"/>
    </location>
</feature>
<feature type="transmembrane region" description="Helical" evidence="2">
    <location>
        <begin position="146"/>
        <end position="166"/>
    </location>
</feature>
<feature type="transmembrane region" description="Helical" evidence="2">
    <location>
        <begin position="191"/>
        <end position="211"/>
    </location>
</feature>
<feature type="topological domain" description="Cytoplasmic" evidence="2">
    <location>
        <begin position="212"/>
        <end position="946"/>
    </location>
</feature>
<feature type="domain" description="FtsK" evidence="3">
    <location>
        <begin position="533"/>
        <end position="746"/>
    </location>
</feature>
<feature type="region of interest" description="Disordered" evidence="4">
    <location>
        <begin position="1"/>
        <end position="68"/>
    </location>
</feature>
<feature type="region of interest" description="Disordered" evidence="4">
    <location>
        <begin position="256"/>
        <end position="409"/>
    </location>
</feature>
<feature type="region of interest" description="Disordered" evidence="4">
    <location>
        <begin position="898"/>
        <end position="946"/>
    </location>
</feature>
<feature type="compositionally biased region" description="Acidic residues" evidence="4">
    <location>
        <begin position="15"/>
        <end position="28"/>
    </location>
</feature>
<feature type="compositionally biased region" description="Basic residues" evidence="4">
    <location>
        <begin position="33"/>
        <end position="43"/>
    </location>
</feature>
<feature type="compositionally biased region" description="Low complexity" evidence="4">
    <location>
        <begin position="263"/>
        <end position="288"/>
    </location>
</feature>
<feature type="compositionally biased region" description="Pro residues" evidence="4">
    <location>
        <begin position="298"/>
        <end position="307"/>
    </location>
</feature>
<feature type="compositionally biased region" description="Low complexity" evidence="4">
    <location>
        <begin position="347"/>
        <end position="363"/>
    </location>
</feature>
<feature type="compositionally biased region" description="Low complexity" evidence="4">
    <location>
        <begin position="927"/>
        <end position="936"/>
    </location>
</feature>
<feature type="binding site" evidence="3">
    <location>
        <begin position="566"/>
        <end position="571"/>
    </location>
    <ligand>
        <name>ATP</name>
        <dbReference type="ChEBI" id="CHEBI:30616"/>
    </ligand>
</feature>
<proteinExistence type="inferred from homology"/>
<keyword id="KW-0067">ATP-binding</keyword>
<keyword id="KW-0131">Cell cycle</keyword>
<keyword id="KW-0132">Cell division</keyword>
<keyword id="KW-1003">Cell membrane</keyword>
<keyword id="KW-0159">Chromosome partition</keyword>
<keyword id="KW-0238">DNA-binding</keyword>
<keyword id="KW-0472">Membrane</keyword>
<keyword id="KW-0547">Nucleotide-binding</keyword>
<keyword id="KW-1185">Reference proteome</keyword>
<keyword id="KW-0812">Transmembrane</keyword>
<keyword id="KW-1133">Transmembrane helix</keyword>
<gene>
    <name type="primary">ftsK</name>
    <name type="ordered locus">CE1861</name>
</gene>
<name>FTSK_COREF</name>
<accession>Q8FPC1</accession>
<comment type="function">
    <text evidence="1">Essential cell division protein that coordinates cell division and chromosome segregation. The N-terminus is involved in assembly of the cell-division machinery. The C-terminus functions as a DNA motor that moves dsDNA in an ATP-dependent manner towards the dif recombination site, which is located within the replication terminus region. Required for activation of the Xer recombinase, allowing activation of chromosome unlinking by recombination (By similarity).</text>
</comment>
<comment type="subunit">
    <text evidence="1">Homohexamer. Forms a ring that surrounds DNA (By similarity).</text>
</comment>
<comment type="subcellular location">
    <subcellularLocation>
        <location evidence="1">Cell membrane</location>
        <topology evidence="1">Multi-pass membrane protein</topology>
    </subcellularLocation>
    <text evidence="1">Located at the septum.</text>
</comment>
<comment type="domain">
    <text evidence="1">Consists of an N-terminal domain, which is sufficient for the localization to the septal ring and is required for cell division, followed by a linker domain, and a C-terminal domain, which forms the translocation motor involved in chromosome segregation. The C-terminal domain can be further subdivided into alpha, beta and gamma subdomains. The alpha and beta subdomains form the DNA pump, and the gamma subdomain is a regulatory subdomain (By similarity).</text>
</comment>
<comment type="similarity">
    <text evidence="5">Belongs to the FtsK/SpoIIIE/SftA family.</text>
</comment>
<comment type="sequence caution" evidence="5">
    <conflict type="erroneous initiation">
        <sequence resource="EMBL-CDS" id="BAC18671"/>
    </conflict>
    <text>Extended N-terminus.</text>
</comment>
<protein>
    <recommendedName>
        <fullName>DNA translocase FtsK</fullName>
    </recommendedName>
</protein>